<comment type="function">
    <text evidence="1">Key enzyme in the regulation of glycerol uptake and metabolism. Catalyzes the phosphorylation of glycerol to yield sn-glycerol 3-phosphate.</text>
</comment>
<comment type="catalytic activity">
    <reaction evidence="1">
        <text>glycerol + ATP = sn-glycerol 3-phosphate + ADP + H(+)</text>
        <dbReference type="Rhea" id="RHEA:21644"/>
        <dbReference type="ChEBI" id="CHEBI:15378"/>
        <dbReference type="ChEBI" id="CHEBI:17754"/>
        <dbReference type="ChEBI" id="CHEBI:30616"/>
        <dbReference type="ChEBI" id="CHEBI:57597"/>
        <dbReference type="ChEBI" id="CHEBI:456216"/>
        <dbReference type="EC" id="2.7.1.30"/>
    </reaction>
</comment>
<comment type="activity regulation">
    <text evidence="1">Inhibited by fructose 1,6-bisphosphate (FBP).</text>
</comment>
<comment type="pathway">
    <text evidence="1">Polyol metabolism; glycerol degradation via glycerol kinase pathway; sn-glycerol 3-phosphate from glycerol: step 1/1.</text>
</comment>
<comment type="similarity">
    <text evidence="1">Belongs to the FGGY kinase family.</text>
</comment>
<protein>
    <recommendedName>
        <fullName evidence="1">Glycerol kinase</fullName>
        <ecNumber evidence="1">2.7.1.30</ecNumber>
    </recommendedName>
    <alternativeName>
        <fullName evidence="1">ATP:glycerol 3-phosphotransferase</fullName>
    </alternativeName>
    <alternativeName>
        <fullName evidence="1">Glycerokinase</fullName>
        <shortName evidence="1">GK</shortName>
    </alternativeName>
</protein>
<evidence type="ECO:0000255" key="1">
    <source>
        <dbReference type="HAMAP-Rule" id="MF_00186"/>
    </source>
</evidence>
<accession>A4FNR2</accession>
<keyword id="KW-0067">ATP-binding</keyword>
<keyword id="KW-0319">Glycerol metabolism</keyword>
<keyword id="KW-0418">Kinase</keyword>
<keyword id="KW-0547">Nucleotide-binding</keyword>
<keyword id="KW-1185">Reference proteome</keyword>
<keyword id="KW-0808">Transferase</keyword>
<proteinExistence type="inferred from homology"/>
<organism>
    <name type="scientific">Saccharopolyspora erythraea (strain ATCC 11635 / DSM 40517 / JCM 4748 / NBRC 13426 / NCIMB 8594 / NRRL 2338)</name>
    <dbReference type="NCBI Taxonomy" id="405948"/>
    <lineage>
        <taxon>Bacteria</taxon>
        <taxon>Bacillati</taxon>
        <taxon>Actinomycetota</taxon>
        <taxon>Actinomycetes</taxon>
        <taxon>Pseudonocardiales</taxon>
        <taxon>Pseudonocardiaceae</taxon>
        <taxon>Saccharopolyspora</taxon>
    </lineage>
</organism>
<feature type="chain" id="PRO_1000020774" description="Glycerol kinase">
    <location>
        <begin position="1"/>
        <end position="500"/>
    </location>
</feature>
<feature type="binding site" evidence="1">
    <location>
        <position position="12"/>
    </location>
    <ligand>
        <name>ADP</name>
        <dbReference type="ChEBI" id="CHEBI:456216"/>
    </ligand>
</feature>
<feature type="binding site" evidence="1">
    <location>
        <position position="12"/>
    </location>
    <ligand>
        <name>ATP</name>
        <dbReference type="ChEBI" id="CHEBI:30616"/>
    </ligand>
</feature>
<feature type="binding site" evidence="1">
    <location>
        <position position="12"/>
    </location>
    <ligand>
        <name>sn-glycerol 3-phosphate</name>
        <dbReference type="ChEBI" id="CHEBI:57597"/>
    </ligand>
</feature>
<feature type="binding site" evidence="1">
    <location>
        <position position="13"/>
    </location>
    <ligand>
        <name>ATP</name>
        <dbReference type="ChEBI" id="CHEBI:30616"/>
    </ligand>
</feature>
<feature type="binding site" evidence="1">
    <location>
        <position position="14"/>
    </location>
    <ligand>
        <name>ATP</name>
        <dbReference type="ChEBI" id="CHEBI:30616"/>
    </ligand>
</feature>
<feature type="binding site" evidence="1">
    <location>
        <position position="16"/>
    </location>
    <ligand>
        <name>ADP</name>
        <dbReference type="ChEBI" id="CHEBI:456216"/>
    </ligand>
</feature>
<feature type="binding site" evidence="1">
    <location>
        <position position="82"/>
    </location>
    <ligand>
        <name>glycerol</name>
        <dbReference type="ChEBI" id="CHEBI:17754"/>
    </ligand>
</feature>
<feature type="binding site" evidence="1">
    <location>
        <position position="82"/>
    </location>
    <ligand>
        <name>sn-glycerol 3-phosphate</name>
        <dbReference type="ChEBI" id="CHEBI:57597"/>
    </ligand>
</feature>
<feature type="binding site" evidence="1">
    <location>
        <position position="83"/>
    </location>
    <ligand>
        <name>glycerol</name>
        <dbReference type="ChEBI" id="CHEBI:17754"/>
    </ligand>
</feature>
<feature type="binding site" evidence="1">
    <location>
        <position position="83"/>
    </location>
    <ligand>
        <name>sn-glycerol 3-phosphate</name>
        <dbReference type="ChEBI" id="CHEBI:57597"/>
    </ligand>
</feature>
<feature type="binding site" evidence="1">
    <location>
        <position position="134"/>
    </location>
    <ligand>
        <name>glycerol</name>
        <dbReference type="ChEBI" id="CHEBI:17754"/>
    </ligand>
</feature>
<feature type="binding site" evidence="1">
    <location>
        <position position="134"/>
    </location>
    <ligand>
        <name>sn-glycerol 3-phosphate</name>
        <dbReference type="ChEBI" id="CHEBI:57597"/>
    </ligand>
</feature>
<feature type="binding site" evidence="1">
    <location>
        <position position="246"/>
    </location>
    <ligand>
        <name>glycerol</name>
        <dbReference type="ChEBI" id="CHEBI:17754"/>
    </ligand>
</feature>
<feature type="binding site" evidence="1">
    <location>
        <position position="246"/>
    </location>
    <ligand>
        <name>sn-glycerol 3-phosphate</name>
        <dbReference type="ChEBI" id="CHEBI:57597"/>
    </ligand>
</feature>
<feature type="binding site" evidence="1">
    <location>
        <position position="247"/>
    </location>
    <ligand>
        <name>glycerol</name>
        <dbReference type="ChEBI" id="CHEBI:17754"/>
    </ligand>
</feature>
<feature type="binding site" evidence="1">
    <location>
        <position position="268"/>
    </location>
    <ligand>
        <name>ADP</name>
        <dbReference type="ChEBI" id="CHEBI:456216"/>
    </ligand>
</feature>
<feature type="binding site" evidence="1">
    <location>
        <position position="268"/>
    </location>
    <ligand>
        <name>ATP</name>
        <dbReference type="ChEBI" id="CHEBI:30616"/>
    </ligand>
</feature>
<feature type="binding site" evidence="1">
    <location>
        <position position="312"/>
    </location>
    <ligand>
        <name>ADP</name>
        <dbReference type="ChEBI" id="CHEBI:456216"/>
    </ligand>
</feature>
<feature type="binding site" evidence="1">
    <location>
        <position position="312"/>
    </location>
    <ligand>
        <name>ATP</name>
        <dbReference type="ChEBI" id="CHEBI:30616"/>
    </ligand>
</feature>
<feature type="binding site" evidence="1">
    <location>
        <position position="316"/>
    </location>
    <ligand>
        <name>ATP</name>
        <dbReference type="ChEBI" id="CHEBI:30616"/>
    </ligand>
</feature>
<feature type="binding site" evidence="1">
    <location>
        <position position="413"/>
    </location>
    <ligand>
        <name>ADP</name>
        <dbReference type="ChEBI" id="CHEBI:456216"/>
    </ligand>
</feature>
<feature type="binding site" evidence="1">
    <location>
        <position position="413"/>
    </location>
    <ligand>
        <name>ATP</name>
        <dbReference type="ChEBI" id="CHEBI:30616"/>
    </ligand>
</feature>
<feature type="binding site" evidence="1">
    <location>
        <position position="417"/>
    </location>
    <ligand>
        <name>ADP</name>
        <dbReference type="ChEBI" id="CHEBI:456216"/>
    </ligand>
</feature>
<dbReference type="EC" id="2.7.1.30" evidence="1"/>
<dbReference type="EMBL" id="AM420293">
    <property type="protein sequence ID" value="CAM05687.1"/>
    <property type="molecule type" value="Genomic_DNA"/>
</dbReference>
<dbReference type="RefSeq" id="WP_009945105.1">
    <property type="nucleotide sequence ID" value="NC_009142.1"/>
</dbReference>
<dbReference type="SMR" id="A4FNR2"/>
<dbReference type="STRING" id="405948.SACE_6518"/>
<dbReference type="KEGG" id="sen:SACE_6518"/>
<dbReference type="eggNOG" id="COG0554">
    <property type="taxonomic scope" value="Bacteria"/>
</dbReference>
<dbReference type="HOGENOM" id="CLU_009281_2_3_11"/>
<dbReference type="OrthoDB" id="9805576at2"/>
<dbReference type="UniPathway" id="UPA00618">
    <property type="reaction ID" value="UER00672"/>
</dbReference>
<dbReference type="Proteomes" id="UP000006728">
    <property type="component" value="Chromosome"/>
</dbReference>
<dbReference type="GO" id="GO:0005829">
    <property type="term" value="C:cytosol"/>
    <property type="evidence" value="ECO:0007669"/>
    <property type="project" value="TreeGrafter"/>
</dbReference>
<dbReference type="GO" id="GO:0005524">
    <property type="term" value="F:ATP binding"/>
    <property type="evidence" value="ECO:0007669"/>
    <property type="project" value="UniProtKB-UniRule"/>
</dbReference>
<dbReference type="GO" id="GO:0004370">
    <property type="term" value="F:glycerol kinase activity"/>
    <property type="evidence" value="ECO:0000250"/>
    <property type="project" value="UniProtKB"/>
</dbReference>
<dbReference type="GO" id="GO:0019563">
    <property type="term" value="P:glycerol catabolic process"/>
    <property type="evidence" value="ECO:0007669"/>
    <property type="project" value="UniProtKB-UniRule"/>
</dbReference>
<dbReference type="GO" id="GO:0006071">
    <property type="term" value="P:glycerol metabolic process"/>
    <property type="evidence" value="ECO:0000250"/>
    <property type="project" value="UniProtKB"/>
</dbReference>
<dbReference type="GO" id="GO:0006072">
    <property type="term" value="P:glycerol-3-phosphate metabolic process"/>
    <property type="evidence" value="ECO:0007669"/>
    <property type="project" value="InterPro"/>
</dbReference>
<dbReference type="CDD" id="cd07769">
    <property type="entry name" value="ASKHA_NBD_FGGY_GK"/>
    <property type="match status" value="1"/>
</dbReference>
<dbReference type="FunFam" id="3.30.420.40:FF:000007">
    <property type="entry name" value="Glycerol kinase"/>
    <property type="match status" value="1"/>
</dbReference>
<dbReference type="FunFam" id="3.30.420.40:FF:000008">
    <property type="entry name" value="Glycerol kinase"/>
    <property type="match status" value="1"/>
</dbReference>
<dbReference type="Gene3D" id="3.30.420.40">
    <property type="match status" value="2"/>
</dbReference>
<dbReference type="HAMAP" id="MF_00186">
    <property type="entry name" value="Glycerol_kin"/>
    <property type="match status" value="1"/>
</dbReference>
<dbReference type="InterPro" id="IPR043129">
    <property type="entry name" value="ATPase_NBD"/>
</dbReference>
<dbReference type="InterPro" id="IPR000577">
    <property type="entry name" value="Carb_kinase_FGGY"/>
</dbReference>
<dbReference type="InterPro" id="IPR018483">
    <property type="entry name" value="Carb_kinase_FGGY_CS"/>
</dbReference>
<dbReference type="InterPro" id="IPR018485">
    <property type="entry name" value="FGGY_C"/>
</dbReference>
<dbReference type="InterPro" id="IPR018484">
    <property type="entry name" value="FGGY_N"/>
</dbReference>
<dbReference type="InterPro" id="IPR005999">
    <property type="entry name" value="Glycerol_kin"/>
</dbReference>
<dbReference type="NCBIfam" id="TIGR01311">
    <property type="entry name" value="glycerol_kin"/>
    <property type="match status" value="1"/>
</dbReference>
<dbReference type="NCBIfam" id="NF000756">
    <property type="entry name" value="PRK00047.1"/>
    <property type="match status" value="1"/>
</dbReference>
<dbReference type="PANTHER" id="PTHR10196:SF69">
    <property type="entry name" value="GLYCEROL KINASE"/>
    <property type="match status" value="1"/>
</dbReference>
<dbReference type="PANTHER" id="PTHR10196">
    <property type="entry name" value="SUGAR KINASE"/>
    <property type="match status" value="1"/>
</dbReference>
<dbReference type="Pfam" id="PF02782">
    <property type="entry name" value="FGGY_C"/>
    <property type="match status" value="1"/>
</dbReference>
<dbReference type="Pfam" id="PF00370">
    <property type="entry name" value="FGGY_N"/>
    <property type="match status" value="1"/>
</dbReference>
<dbReference type="PIRSF" id="PIRSF000538">
    <property type="entry name" value="GlpK"/>
    <property type="match status" value="1"/>
</dbReference>
<dbReference type="SUPFAM" id="SSF53067">
    <property type="entry name" value="Actin-like ATPase domain"/>
    <property type="match status" value="2"/>
</dbReference>
<dbReference type="PROSITE" id="PS00933">
    <property type="entry name" value="FGGY_KINASES_1"/>
    <property type="match status" value="1"/>
</dbReference>
<dbReference type="PROSITE" id="PS00445">
    <property type="entry name" value="FGGY_KINASES_2"/>
    <property type="match status" value="1"/>
</dbReference>
<sequence>MASYVAAIDQGTTSTRCMIFNHSGRVVAVDQVEHRQIFPRAGWVEHDPEEIWSNTRQVCAGALAKADLVTSEIAAVGITNQRETTVVWDRKTGKPVYNAIVWQDTRTDSIVNELAADGGQNRYHRKTGLPLATYFSGTKIRWILDNVDGVRARAEKGELLFGNMDTWVLWNSTGGPDGGLHVTDPTNASRTLLMDLETLDWDTDICAEFGIPTSMLPEIRSSSEVYGHFRERGVFGGLPIAGILGDQQAATFGQACLSPGEAKNTYGTGNFLLLNTGTERVLSENGLLTTVGYKIGGNDTVYCLEGSIAVTGSLVQWLRDNLGLIASAPEIEQLARTVDDNGGAYFVPAFSGLFAPHWRSDARGAIVGLTRFVDRGHLARAVLEATAFQTREVIEAMNADSGVPLKSLKVDGGMVGNELLMQFQADILGVPVIRPVVSETTALGAAYAAGLAVGFWGSEEDIRSNWAKDKQWDPLMPEEKREAEYRQWQKAVTKTFDWVE</sequence>
<name>GLPK_SACEN</name>
<gene>
    <name evidence="1" type="primary">glpK</name>
    <name type="ordered locus">SACE_6518</name>
</gene>
<reference key="1">
    <citation type="journal article" date="2007" name="Nat. Biotechnol.">
        <title>Complete genome sequence of the erythromycin-producing bacterium Saccharopolyspora erythraea NRRL23338.</title>
        <authorList>
            <person name="Oliynyk M."/>
            <person name="Samborskyy M."/>
            <person name="Lester J.B."/>
            <person name="Mironenko T."/>
            <person name="Scott N."/>
            <person name="Dickens S."/>
            <person name="Haydock S.F."/>
            <person name="Leadlay P.F."/>
        </authorList>
    </citation>
    <scope>NUCLEOTIDE SEQUENCE [LARGE SCALE GENOMIC DNA]</scope>
    <source>
        <strain>ATCC 11635 / DSM 40517 / JCM 4748 / NBRC 13426 / NCIMB 8594 / NRRL 2338</strain>
    </source>
</reference>